<accession>A7EAE5</accession>
<reference key="1">
    <citation type="journal article" date="2011" name="PLoS Genet.">
        <title>Genomic analysis of the necrotrophic fungal pathogens Sclerotinia sclerotiorum and Botrytis cinerea.</title>
        <authorList>
            <person name="Amselem J."/>
            <person name="Cuomo C.A."/>
            <person name="van Kan J.A.L."/>
            <person name="Viaud M."/>
            <person name="Benito E.P."/>
            <person name="Couloux A."/>
            <person name="Coutinho P.M."/>
            <person name="de Vries R.P."/>
            <person name="Dyer P.S."/>
            <person name="Fillinger S."/>
            <person name="Fournier E."/>
            <person name="Gout L."/>
            <person name="Hahn M."/>
            <person name="Kohn L."/>
            <person name="Lapalu N."/>
            <person name="Plummer K.M."/>
            <person name="Pradier J.-M."/>
            <person name="Quevillon E."/>
            <person name="Sharon A."/>
            <person name="Simon A."/>
            <person name="ten Have A."/>
            <person name="Tudzynski B."/>
            <person name="Tudzynski P."/>
            <person name="Wincker P."/>
            <person name="Andrew M."/>
            <person name="Anthouard V."/>
            <person name="Beever R.E."/>
            <person name="Beffa R."/>
            <person name="Benoit I."/>
            <person name="Bouzid O."/>
            <person name="Brault B."/>
            <person name="Chen Z."/>
            <person name="Choquer M."/>
            <person name="Collemare J."/>
            <person name="Cotton P."/>
            <person name="Danchin E.G."/>
            <person name="Da Silva C."/>
            <person name="Gautier A."/>
            <person name="Giraud C."/>
            <person name="Giraud T."/>
            <person name="Gonzalez C."/>
            <person name="Grossetete S."/>
            <person name="Gueldener U."/>
            <person name="Henrissat B."/>
            <person name="Howlett B.J."/>
            <person name="Kodira C."/>
            <person name="Kretschmer M."/>
            <person name="Lappartient A."/>
            <person name="Leroch M."/>
            <person name="Levis C."/>
            <person name="Mauceli E."/>
            <person name="Neuveglise C."/>
            <person name="Oeser B."/>
            <person name="Pearson M."/>
            <person name="Poulain J."/>
            <person name="Poussereau N."/>
            <person name="Quesneville H."/>
            <person name="Rascle C."/>
            <person name="Schumacher J."/>
            <person name="Segurens B."/>
            <person name="Sexton A."/>
            <person name="Silva E."/>
            <person name="Sirven C."/>
            <person name="Soanes D.M."/>
            <person name="Talbot N.J."/>
            <person name="Templeton M."/>
            <person name="Yandava C."/>
            <person name="Yarden O."/>
            <person name="Zeng Q."/>
            <person name="Rollins J.A."/>
            <person name="Lebrun M.-H."/>
            <person name="Dickman M."/>
        </authorList>
    </citation>
    <scope>NUCLEOTIDE SEQUENCE [LARGE SCALE GENOMIC DNA]</scope>
    <source>
        <strain>ATCC 18683 / 1980 / Ss-1</strain>
    </source>
</reference>
<organism>
    <name type="scientific">Sclerotinia sclerotiorum (strain ATCC 18683 / 1980 / Ss-1)</name>
    <name type="common">White mold</name>
    <name type="synonym">Whetzelinia sclerotiorum</name>
    <dbReference type="NCBI Taxonomy" id="665079"/>
    <lineage>
        <taxon>Eukaryota</taxon>
        <taxon>Fungi</taxon>
        <taxon>Dikarya</taxon>
        <taxon>Ascomycota</taxon>
        <taxon>Pezizomycotina</taxon>
        <taxon>Leotiomycetes</taxon>
        <taxon>Helotiales</taxon>
        <taxon>Sclerotiniaceae</taxon>
        <taxon>Sclerotinia</taxon>
    </lineage>
</organism>
<evidence type="ECO:0000250" key="1"/>
<evidence type="ECO:0000305" key="2"/>
<sequence length="120" mass="13250">MTSSLLLTNLPHDSSSALEHAFSFPTAKITVRFQPIGSAPILQRPVSKISSSQQRFETVVAYLRRVLKLDRKGGEGDSVFLYVNSCFAPALDEVVGNLHRCFKDSKDQLIVTYSMTPAFG</sequence>
<proteinExistence type="inferred from homology"/>
<keyword id="KW-0072">Autophagy</keyword>
<keyword id="KW-1017">Isopeptide bond</keyword>
<keyword id="KW-0472">Membrane</keyword>
<keyword id="KW-0653">Protein transport</keyword>
<keyword id="KW-1185">Reference proteome</keyword>
<keyword id="KW-0813">Transport</keyword>
<keyword id="KW-0833">Ubl conjugation pathway</keyword>
<protein>
    <recommendedName>
        <fullName>Ubiquitin-like protein ATG12</fullName>
    </recommendedName>
    <alternativeName>
        <fullName>Autophagy-related protein 12</fullName>
    </alternativeName>
</protein>
<name>ATG12_SCLS1</name>
<gene>
    <name type="primary">atg12</name>
    <name type="ORF">SS1G_02277</name>
</gene>
<feature type="chain" id="PRO_0000317941" description="Ubiquitin-like protein ATG12">
    <location>
        <begin position="1"/>
        <end position="120"/>
    </location>
</feature>
<feature type="cross-link" description="Glycyl lysine isopeptide (Gly-Lys) (interchain with K-97 in ATG5)" evidence="1">
    <location>
        <position position="120"/>
    </location>
</feature>
<dbReference type="EMBL" id="CH476623">
    <property type="protein sequence ID" value="EDN99423.1"/>
    <property type="status" value="ALT_SEQ"/>
    <property type="molecule type" value="Genomic_DNA"/>
</dbReference>
<dbReference type="RefSeq" id="XP_001596061.1">
    <property type="nucleotide sequence ID" value="XM_001596011.1"/>
</dbReference>
<dbReference type="SMR" id="A7EAE5"/>
<dbReference type="STRING" id="665079.A7EAE5"/>
<dbReference type="GeneID" id="5492567"/>
<dbReference type="KEGG" id="ssl:SS1G_02277"/>
<dbReference type="InParanoid" id="A7EAE5"/>
<dbReference type="Proteomes" id="UP000001312">
    <property type="component" value="Unassembled WGS sequence"/>
</dbReference>
<dbReference type="GO" id="GO:0034274">
    <property type="term" value="C:Atg12-Atg5-Atg16 complex"/>
    <property type="evidence" value="ECO:0000318"/>
    <property type="project" value="GO_Central"/>
</dbReference>
<dbReference type="GO" id="GO:0000421">
    <property type="term" value="C:autophagosome membrane"/>
    <property type="evidence" value="ECO:0000318"/>
    <property type="project" value="GO_Central"/>
</dbReference>
<dbReference type="GO" id="GO:0034045">
    <property type="term" value="C:phagophore assembly site membrane"/>
    <property type="evidence" value="ECO:0000318"/>
    <property type="project" value="GO_Central"/>
</dbReference>
<dbReference type="GO" id="GO:0031386">
    <property type="term" value="F:protein tag activity"/>
    <property type="evidence" value="ECO:0000318"/>
    <property type="project" value="GO_Central"/>
</dbReference>
<dbReference type="GO" id="GO:0000045">
    <property type="term" value="P:autophagosome assembly"/>
    <property type="evidence" value="ECO:0000318"/>
    <property type="project" value="GO_Central"/>
</dbReference>
<dbReference type="GO" id="GO:0097352">
    <property type="term" value="P:autophagosome maturation"/>
    <property type="evidence" value="ECO:0000318"/>
    <property type="project" value="GO_Central"/>
</dbReference>
<dbReference type="GO" id="GO:0000422">
    <property type="term" value="P:autophagy of mitochondrion"/>
    <property type="evidence" value="ECO:0000318"/>
    <property type="project" value="GO_Central"/>
</dbReference>
<dbReference type="GO" id="GO:0061723">
    <property type="term" value="P:glycophagy"/>
    <property type="evidence" value="ECO:0000318"/>
    <property type="project" value="GO_Central"/>
</dbReference>
<dbReference type="GO" id="GO:0034727">
    <property type="term" value="P:piecemeal microautophagy of the nucleus"/>
    <property type="evidence" value="ECO:0000318"/>
    <property type="project" value="GO_Central"/>
</dbReference>
<dbReference type="GO" id="GO:0015031">
    <property type="term" value="P:protein transport"/>
    <property type="evidence" value="ECO:0007669"/>
    <property type="project" value="UniProtKB-KW"/>
</dbReference>
<dbReference type="CDD" id="cd01612">
    <property type="entry name" value="Ubl_ATG12"/>
    <property type="match status" value="1"/>
</dbReference>
<dbReference type="FunFam" id="3.10.20.90:FF:000148">
    <property type="entry name" value="Ubiquitin-like protein ATG12"/>
    <property type="match status" value="1"/>
</dbReference>
<dbReference type="Gene3D" id="3.10.20.90">
    <property type="entry name" value="Phosphatidylinositol 3-kinase Catalytic Subunit, Chain A, domain 1"/>
    <property type="match status" value="1"/>
</dbReference>
<dbReference type="InterPro" id="IPR007242">
    <property type="entry name" value="Atg12"/>
</dbReference>
<dbReference type="InterPro" id="IPR029071">
    <property type="entry name" value="Ubiquitin-like_domsf"/>
</dbReference>
<dbReference type="PANTHER" id="PTHR13385">
    <property type="entry name" value="AUTOPHAGY PROTEIN 12"/>
    <property type="match status" value="1"/>
</dbReference>
<dbReference type="PANTHER" id="PTHR13385:SF0">
    <property type="entry name" value="UBIQUITIN-LIKE PROTEIN ATG12"/>
    <property type="match status" value="1"/>
</dbReference>
<dbReference type="Pfam" id="PF04110">
    <property type="entry name" value="APG12"/>
    <property type="match status" value="1"/>
</dbReference>
<dbReference type="SUPFAM" id="SSF54236">
    <property type="entry name" value="Ubiquitin-like"/>
    <property type="match status" value="1"/>
</dbReference>
<comment type="function">
    <text evidence="1">Ubiquitin-like protein involved in cytoplasm to vacuole transport (Cvt), autophagy vesicles formation, mitophagy, and nucleophagy. Conjugation with atg5 through a ubiquitin-like conjugating system involving also atg7 as an E1-like activating enzyme and atg10 as an E2-like conjugating enzyme, is essential for its function. The atg12-atg5 conjugate functions as an E3-like enzyme which is required for lipidation of atg8 and atg8 association to the vesicle membranes (By similarity).</text>
</comment>
<comment type="subunit">
    <text evidence="1">Forms a conjugate with atg5.</text>
</comment>
<comment type="subcellular location">
    <subcellularLocation>
        <location evidence="1">Preautophagosomal structure membrane</location>
        <topology evidence="1">Peripheral membrane protein</topology>
    </subcellularLocation>
</comment>
<comment type="similarity">
    <text evidence="2">Belongs to the ATG12 family.</text>
</comment>
<comment type="sequence caution" evidence="2">
    <conflict type="erroneous gene model prediction">
        <sequence resource="EMBL-CDS" id="EDN99423"/>
    </conflict>
</comment>